<reference key="1">
    <citation type="journal article" date="1999" name="Nature">
        <title>Sequence and analysis of chromosome 2 of the plant Arabidopsis thaliana.</title>
        <authorList>
            <person name="Lin X."/>
            <person name="Kaul S."/>
            <person name="Rounsley S.D."/>
            <person name="Shea T.P."/>
            <person name="Benito M.-I."/>
            <person name="Town C.D."/>
            <person name="Fujii C.Y."/>
            <person name="Mason T.M."/>
            <person name="Bowman C.L."/>
            <person name="Barnstead M.E."/>
            <person name="Feldblyum T.V."/>
            <person name="Buell C.R."/>
            <person name="Ketchum K.A."/>
            <person name="Lee J.J."/>
            <person name="Ronning C.M."/>
            <person name="Koo H.L."/>
            <person name="Moffat K.S."/>
            <person name="Cronin L.A."/>
            <person name="Shen M."/>
            <person name="Pai G."/>
            <person name="Van Aken S."/>
            <person name="Umayam L."/>
            <person name="Tallon L.J."/>
            <person name="Gill J.E."/>
            <person name="Adams M.D."/>
            <person name="Carrera A.J."/>
            <person name="Creasy T.H."/>
            <person name="Goodman H.M."/>
            <person name="Somerville C.R."/>
            <person name="Copenhaver G.P."/>
            <person name="Preuss D."/>
            <person name="Nierman W.C."/>
            <person name="White O."/>
            <person name="Eisen J.A."/>
            <person name="Salzberg S.L."/>
            <person name="Fraser C.M."/>
            <person name="Venter J.C."/>
        </authorList>
    </citation>
    <scope>NUCLEOTIDE SEQUENCE [LARGE SCALE GENOMIC DNA]</scope>
    <source>
        <strain>cv. Columbia</strain>
    </source>
</reference>
<reference key="2">
    <citation type="journal article" date="2017" name="Plant J.">
        <title>Araport11: a complete reannotation of the Arabidopsis thaliana reference genome.</title>
        <authorList>
            <person name="Cheng C.Y."/>
            <person name="Krishnakumar V."/>
            <person name="Chan A.P."/>
            <person name="Thibaud-Nissen F."/>
            <person name="Schobel S."/>
            <person name="Town C.D."/>
        </authorList>
    </citation>
    <scope>GENOME REANNOTATION</scope>
    <source>
        <strain>cv. Columbia</strain>
    </source>
</reference>
<reference key="3">
    <citation type="journal article" date="2009" name="FEBS J.">
        <title>Molecular characterization of Arabidopsis thaliana PUF proteins -- binding specificity and target candidates.</title>
        <authorList>
            <person name="Francischini C.W."/>
            <person name="Quaggio R.B."/>
        </authorList>
    </citation>
    <scope>GENE FAMILY</scope>
    <scope>FUNCTION</scope>
    <scope>RNA-BINDING</scope>
</reference>
<reference key="4">
    <citation type="journal article" date="2010" name="BMC Plant Biol.">
        <title>The Puf family of RNA-binding proteins in plants: phylogeny, structural modeling, activity and subcellular localization.</title>
        <authorList>
            <person name="Tam P.P."/>
            <person name="Barrette-Ng I.H."/>
            <person name="Simon D.M."/>
            <person name="Tam M.W."/>
            <person name="Ang A.L."/>
            <person name="Muench D.G."/>
        </authorList>
    </citation>
    <scope>GENE FAMILY</scope>
</reference>
<sequence length="968" mass="106563">MIPELGRRPMHRGNEDSSFGDDYEKEIGVLLGEQQRRQVEADELERELNLFRSGSAPPTVDGSVSAAGGLFSGGGGAPFLEFGGVNKGNGFGGDDEEFRKDPAYLSYYYANMKLNPRLPPPLMSREDLRVAQRLKGSNNVLGGVGDRRKVNDNRSLFSMPPGFEGEKTGASASEWDANGLIGLPGLGLGGKQKSFADIFQADMGHGHPVAQQPSRPASRNTFDENVDSNNNLSPSASQGIGAPSPYSYAAVLGSSLSRNGTPDPQAIARVPSPCLTPIGSGRMSSNDKRNTSNQSPFNGVTSGLNESSDLVNALSGLNLSCSVGLDDRSQAEQDVEKVRNYMFGLQGGHNEVNQHEFPNKSDQAHKATGSLRNSQLRGPHGSAYNGGVGLANPYQQLDSPNYCLNNYALNPAVASMMANQLGNNNFAPMYDNVSALGFSGMDSRHHGRGFVSSGQNLSESRNLGRFSNRMMGGGAGLQSHMVDPMYNQYADSLDLLNDPSMDRNFMGGSSYMDMLELQRAYLGAQKSQYGVPYKSGSPNSHSYYGSPTFGSNMSYPGSPLAHHGMPNSLMSPYSPMRRDEVNMRFPSATRNYSGGLMGSWHMDASFDEGFGSSMLEEFKSNKTRGFELSEIAGHVVEFSSDQYGSRFIQQKLETATTDEKNMVYEEIMPQALVLMTDVFGNYVIQKFFEHGLPPQRRELAEKLFDHVLPLSLQMYGCRVIQKAIEVVDLDQKIKMVKELDGHVMRCVRDQNGNHVVQKCIECVPEENIEFIISTFFGHVVTLSTHPYGCRVIQRVLEHCHDPDTQSKVMEEILSTVSMLAQDQYGNYVVQHVLEHGKPDERTVIIKELAGKIVQMSQQKFASNVVEKCLTFGGPEERELLVNEMLGTTDENEPLQAMMKDQFANYVVQKVLETCDDQQRELILTRIKVHLTALKKYTYGKHVVARIEKLVAAGERRMALQSLTQPQMA</sequence>
<evidence type="ECO:0000250" key="1"/>
<evidence type="ECO:0000250" key="2">
    <source>
        <dbReference type="UniProtKB" id="Q9SS47"/>
    </source>
</evidence>
<evidence type="ECO:0000250" key="3">
    <source>
        <dbReference type="UniProtKB" id="Q9ZW02"/>
    </source>
</evidence>
<evidence type="ECO:0000255" key="4">
    <source>
        <dbReference type="PROSITE-ProRule" id="PRU00318"/>
    </source>
</evidence>
<evidence type="ECO:0000256" key="5">
    <source>
        <dbReference type="SAM" id="MobiDB-lite"/>
    </source>
</evidence>
<evidence type="ECO:0000269" key="6">
    <source>
    </source>
</evidence>
<evidence type="ECO:0000305" key="7"/>
<proteinExistence type="evidence at protein level"/>
<name>PUM1_ARATH</name>
<keyword id="KW-0963">Cytoplasm</keyword>
<keyword id="KW-0597">Phosphoprotein</keyword>
<keyword id="KW-1185">Reference proteome</keyword>
<keyword id="KW-0677">Repeat</keyword>
<keyword id="KW-0694">RNA-binding</keyword>
<keyword id="KW-0810">Translation regulation</keyword>
<protein>
    <recommendedName>
        <fullName>Pumilio homolog 1</fullName>
        <shortName>APUM-1</shortName>
        <shortName>AtPUM1</shortName>
    </recommendedName>
</protein>
<gene>
    <name type="primary">APUM1</name>
    <name type="ordered locus">At2g29200</name>
    <name type="ORF">F16P2.42</name>
</gene>
<accession>Q9ZW07</accession>
<comment type="function">
    <text evidence="6">Sequence-specific RNA-binding protein that regulates translation and mRNA stability by binding the 3'-UTR of target mRNAs. Binds the APUM-binding elements (APBEs) in the 3'-UTR mRNA sequence of CLV1, PNH, WUS and FAS2.</text>
</comment>
<comment type="subcellular location">
    <subcellularLocation>
        <location evidence="7">Cytoplasm</location>
    </subcellularLocation>
</comment>
<comment type="domain">
    <text evidence="1">The pumilio repeats mediate the association with RNA by packing together to form a right-handed superhelix that approximates a half donut. The number as well as the specific sequence of the repeats determine the specificity for target mRNAs (By similarity).</text>
</comment>
<dbReference type="EMBL" id="AC004561">
    <property type="protein sequence ID" value="AAC95215.1"/>
    <property type="molecule type" value="Genomic_DNA"/>
</dbReference>
<dbReference type="EMBL" id="CP002685">
    <property type="protein sequence ID" value="AEC08222.1"/>
    <property type="molecule type" value="Genomic_DNA"/>
</dbReference>
<dbReference type="EMBL" id="CP002685">
    <property type="protein sequence ID" value="ANM62387.1"/>
    <property type="molecule type" value="Genomic_DNA"/>
</dbReference>
<dbReference type="PIR" id="F84693">
    <property type="entry name" value="F84693"/>
</dbReference>
<dbReference type="RefSeq" id="NP_001324547.1">
    <property type="nucleotide sequence ID" value="NM_001336203.1"/>
</dbReference>
<dbReference type="RefSeq" id="NP_180483.1">
    <property type="nucleotide sequence ID" value="NM_128476.3"/>
</dbReference>
<dbReference type="SMR" id="Q9ZW07"/>
<dbReference type="BioGRID" id="2819">
    <property type="interactions" value="1"/>
</dbReference>
<dbReference type="FunCoup" id="Q9ZW07">
    <property type="interactions" value="552"/>
</dbReference>
<dbReference type="STRING" id="3702.Q9ZW07"/>
<dbReference type="GlyGen" id="Q9ZW07">
    <property type="glycosylation" value="1 site, 1 O-linked glycan (1 site)"/>
</dbReference>
<dbReference type="iPTMnet" id="Q9ZW07"/>
<dbReference type="PaxDb" id="3702-AT2G29200.1"/>
<dbReference type="ProteomicsDB" id="226458"/>
<dbReference type="EnsemblPlants" id="AT2G29200.1">
    <property type="protein sequence ID" value="AT2G29200.1"/>
    <property type="gene ID" value="AT2G29200"/>
</dbReference>
<dbReference type="EnsemblPlants" id="AT2G29200.2">
    <property type="protein sequence ID" value="AT2G29200.2"/>
    <property type="gene ID" value="AT2G29200"/>
</dbReference>
<dbReference type="GeneID" id="817469"/>
<dbReference type="Gramene" id="AT2G29200.1">
    <property type="protein sequence ID" value="AT2G29200.1"/>
    <property type="gene ID" value="AT2G29200"/>
</dbReference>
<dbReference type="Gramene" id="AT2G29200.2">
    <property type="protein sequence ID" value="AT2G29200.2"/>
    <property type="gene ID" value="AT2G29200"/>
</dbReference>
<dbReference type="KEGG" id="ath:AT2G29200"/>
<dbReference type="Araport" id="AT2G29200"/>
<dbReference type="TAIR" id="AT2G29200">
    <property type="gene designation" value="PUM1"/>
</dbReference>
<dbReference type="eggNOG" id="KOG1488">
    <property type="taxonomic scope" value="Eukaryota"/>
</dbReference>
<dbReference type="HOGENOM" id="CLU_004017_1_1_1"/>
<dbReference type="InParanoid" id="Q9ZW07"/>
<dbReference type="OMA" id="GRMSSND"/>
<dbReference type="PhylomeDB" id="Q9ZW07"/>
<dbReference type="PRO" id="PR:Q9ZW07"/>
<dbReference type="Proteomes" id="UP000006548">
    <property type="component" value="Chromosome 2"/>
</dbReference>
<dbReference type="ExpressionAtlas" id="Q9ZW07">
    <property type="expression patterns" value="baseline and differential"/>
</dbReference>
<dbReference type="GO" id="GO:0005737">
    <property type="term" value="C:cytoplasm"/>
    <property type="evidence" value="ECO:0007669"/>
    <property type="project" value="UniProtKB-SubCell"/>
</dbReference>
<dbReference type="GO" id="GO:0003729">
    <property type="term" value="F:mRNA binding"/>
    <property type="evidence" value="ECO:0000314"/>
    <property type="project" value="UniProtKB"/>
</dbReference>
<dbReference type="GO" id="GO:0006417">
    <property type="term" value="P:regulation of translation"/>
    <property type="evidence" value="ECO:0007669"/>
    <property type="project" value="UniProtKB-KW"/>
</dbReference>
<dbReference type="CDD" id="cd07920">
    <property type="entry name" value="Pumilio"/>
    <property type="match status" value="1"/>
</dbReference>
<dbReference type="FunFam" id="1.25.10.10:FF:000004">
    <property type="entry name" value="Pumilio homolog 1 isoform 2"/>
    <property type="match status" value="1"/>
</dbReference>
<dbReference type="Gene3D" id="1.25.10.10">
    <property type="entry name" value="Leucine-rich Repeat Variant"/>
    <property type="match status" value="1"/>
</dbReference>
<dbReference type="InterPro" id="IPR011989">
    <property type="entry name" value="ARM-like"/>
</dbReference>
<dbReference type="InterPro" id="IPR016024">
    <property type="entry name" value="ARM-type_fold"/>
</dbReference>
<dbReference type="InterPro" id="IPR012940">
    <property type="entry name" value="NABP"/>
</dbReference>
<dbReference type="InterPro" id="IPR033133">
    <property type="entry name" value="PUM-HD"/>
</dbReference>
<dbReference type="InterPro" id="IPR033712">
    <property type="entry name" value="Pumilio_RNA-bd"/>
</dbReference>
<dbReference type="InterPro" id="IPR001313">
    <property type="entry name" value="Pumilio_RNA-bd_rpt"/>
</dbReference>
<dbReference type="PANTHER" id="PTHR12537:SF128">
    <property type="entry name" value="PUMILIO HOMOLOG 1-RELATED"/>
    <property type="match status" value="1"/>
</dbReference>
<dbReference type="PANTHER" id="PTHR12537">
    <property type="entry name" value="RNA BINDING PROTEIN PUMILIO-RELATED"/>
    <property type="match status" value="1"/>
</dbReference>
<dbReference type="Pfam" id="PF07990">
    <property type="entry name" value="NABP"/>
    <property type="match status" value="2"/>
</dbReference>
<dbReference type="Pfam" id="PF00806">
    <property type="entry name" value="PUF"/>
    <property type="match status" value="8"/>
</dbReference>
<dbReference type="SMART" id="SM00025">
    <property type="entry name" value="Pumilio"/>
    <property type="match status" value="8"/>
</dbReference>
<dbReference type="SUPFAM" id="SSF48371">
    <property type="entry name" value="ARM repeat"/>
    <property type="match status" value="1"/>
</dbReference>
<dbReference type="PROSITE" id="PS50302">
    <property type="entry name" value="PUM"/>
    <property type="match status" value="9"/>
</dbReference>
<dbReference type="PROSITE" id="PS50303">
    <property type="entry name" value="PUM_HD"/>
    <property type="match status" value="1"/>
</dbReference>
<feature type="chain" id="PRO_0000401383" description="Pumilio homolog 1">
    <location>
        <begin position="1"/>
        <end position="968"/>
    </location>
</feature>
<feature type="domain" description="PUM-HD" evidence="4">
    <location>
        <begin position="610"/>
        <end position="950"/>
    </location>
</feature>
<feature type="repeat" description="Pumilio 1">
    <location>
        <begin position="630"/>
        <end position="665"/>
    </location>
</feature>
<feature type="repeat" description="Pumilio 2">
    <location>
        <begin position="666"/>
        <end position="701"/>
    </location>
</feature>
<feature type="repeat" description="Pumilio 3">
    <location>
        <begin position="702"/>
        <end position="737"/>
    </location>
</feature>
<feature type="repeat" description="Pumilio 4">
    <location>
        <begin position="738"/>
        <end position="773"/>
    </location>
</feature>
<feature type="repeat" description="Pumilio 5">
    <location>
        <begin position="774"/>
        <end position="810"/>
    </location>
</feature>
<feature type="repeat" description="Pumilio 6">
    <location>
        <begin position="811"/>
        <end position="846"/>
    </location>
</feature>
<feature type="repeat" description="Pumilio 7">
    <location>
        <begin position="847"/>
        <end position="882"/>
    </location>
</feature>
<feature type="repeat" description="Pumilio 8">
    <location>
        <begin position="883"/>
        <end position="924"/>
    </location>
</feature>
<feature type="region of interest" description="Disordered" evidence="5">
    <location>
        <begin position="1"/>
        <end position="25"/>
    </location>
</feature>
<feature type="region of interest" description="Disordered" evidence="5">
    <location>
        <begin position="138"/>
        <end position="171"/>
    </location>
</feature>
<feature type="region of interest" description="Disordered" evidence="5">
    <location>
        <begin position="204"/>
        <end position="240"/>
    </location>
</feature>
<feature type="region of interest" description="Disordered" evidence="5">
    <location>
        <begin position="260"/>
        <end position="303"/>
    </location>
</feature>
<feature type="region of interest" description="Disordered" evidence="5">
    <location>
        <begin position="360"/>
        <end position="382"/>
    </location>
</feature>
<feature type="compositionally biased region" description="Polar residues" evidence="5">
    <location>
        <begin position="211"/>
        <end position="220"/>
    </location>
</feature>
<feature type="compositionally biased region" description="Polar residues" evidence="5">
    <location>
        <begin position="227"/>
        <end position="238"/>
    </location>
</feature>
<feature type="compositionally biased region" description="Polar residues" evidence="5">
    <location>
        <begin position="291"/>
        <end position="303"/>
    </location>
</feature>
<feature type="modified residue" description="Phosphoserine" evidence="2">
    <location>
        <position position="194"/>
    </location>
</feature>
<feature type="modified residue" description="Phosphothreonine" evidence="3">
    <location>
        <position position="261"/>
    </location>
</feature>
<organism>
    <name type="scientific">Arabidopsis thaliana</name>
    <name type="common">Mouse-ear cress</name>
    <dbReference type="NCBI Taxonomy" id="3702"/>
    <lineage>
        <taxon>Eukaryota</taxon>
        <taxon>Viridiplantae</taxon>
        <taxon>Streptophyta</taxon>
        <taxon>Embryophyta</taxon>
        <taxon>Tracheophyta</taxon>
        <taxon>Spermatophyta</taxon>
        <taxon>Magnoliopsida</taxon>
        <taxon>eudicotyledons</taxon>
        <taxon>Gunneridae</taxon>
        <taxon>Pentapetalae</taxon>
        <taxon>rosids</taxon>
        <taxon>malvids</taxon>
        <taxon>Brassicales</taxon>
        <taxon>Brassicaceae</taxon>
        <taxon>Camelineae</taxon>
        <taxon>Arabidopsis</taxon>
    </lineage>
</organism>